<sequence>MAQITASMVKELREKTGAGMMDCKKVLSEADGNIEKAVELLREKGLAGAEKKAGRLASEGIVETYIHGGKIASLVEINSETDFVAKNEEFKNFAKDIAMQVVASNPKYVSREEVPAEEVEKEKEVLIHQALNENDGKNIPEDKAKMIAEKKVEGRINKFYSQICLLEQPFIKDPNKTVEQLLTDLIAKIGENIKIRRFARFEVGEGLEKKNEDFAEEVKKQMGQ</sequence>
<feature type="chain" id="PRO_1000116739" description="Elongation factor Ts">
    <location>
        <begin position="1"/>
        <end position="224"/>
    </location>
</feature>
<feature type="region of interest" description="Involved in Mg(2+) ion dislocation from EF-Tu" evidence="1">
    <location>
        <begin position="81"/>
        <end position="84"/>
    </location>
</feature>
<comment type="function">
    <text evidence="1">Associates with the EF-Tu.GDP complex and induces the exchange of GDP to GTP. It remains bound to the aminoacyl-tRNA.EF-Tu.GTP complex up to the GTP hydrolysis stage on the ribosome.</text>
</comment>
<comment type="subcellular location">
    <subcellularLocation>
        <location evidence="1">Cytoplasm</location>
    </subcellularLocation>
</comment>
<comment type="similarity">
    <text evidence="1">Belongs to the EF-Ts family.</text>
</comment>
<dbReference type="EMBL" id="AP008971">
    <property type="protein sequence ID" value="BAG08125.1"/>
    <property type="molecule type" value="Genomic_DNA"/>
</dbReference>
<dbReference type="RefSeq" id="WP_002838199.1">
    <property type="nucleotide sequence ID" value="NC_010376.1"/>
</dbReference>
<dbReference type="SMR" id="B0S185"/>
<dbReference type="STRING" id="334413.FMG_0707"/>
<dbReference type="KEGG" id="fma:FMG_0707"/>
<dbReference type="eggNOG" id="COG0264">
    <property type="taxonomic scope" value="Bacteria"/>
</dbReference>
<dbReference type="HOGENOM" id="CLU_047155_1_1_9"/>
<dbReference type="Proteomes" id="UP000001319">
    <property type="component" value="Chromosome"/>
</dbReference>
<dbReference type="GO" id="GO:0005737">
    <property type="term" value="C:cytoplasm"/>
    <property type="evidence" value="ECO:0007669"/>
    <property type="project" value="UniProtKB-SubCell"/>
</dbReference>
<dbReference type="GO" id="GO:0003746">
    <property type="term" value="F:translation elongation factor activity"/>
    <property type="evidence" value="ECO:0007669"/>
    <property type="project" value="UniProtKB-UniRule"/>
</dbReference>
<dbReference type="CDD" id="cd14275">
    <property type="entry name" value="UBA_EF-Ts"/>
    <property type="match status" value="1"/>
</dbReference>
<dbReference type="FunFam" id="1.10.8.10:FF:000001">
    <property type="entry name" value="Elongation factor Ts"/>
    <property type="match status" value="1"/>
</dbReference>
<dbReference type="Gene3D" id="1.10.286.20">
    <property type="match status" value="1"/>
</dbReference>
<dbReference type="Gene3D" id="1.10.8.10">
    <property type="entry name" value="DNA helicase RuvA subunit, C-terminal domain"/>
    <property type="match status" value="1"/>
</dbReference>
<dbReference type="Gene3D" id="3.30.479.20">
    <property type="entry name" value="Elongation factor Ts, dimerisation domain"/>
    <property type="match status" value="1"/>
</dbReference>
<dbReference type="HAMAP" id="MF_00050">
    <property type="entry name" value="EF_Ts"/>
    <property type="match status" value="1"/>
</dbReference>
<dbReference type="InterPro" id="IPR036402">
    <property type="entry name" value="EF-Ts_dimer_sf"/>
</dbReference>
<dbReference type="InterPro" id="IPR001816">
    <property type="entry name" value="Transl_elong_EFTs/EF1B"/>
</dbReference>
<dbReference type="InterPro" id="IPR014039">
    <property type="entry name" value="Transl_elong_EFTs/EF1B_dimer"/>
</dbReference>
<dbReference type="InterPro" id="IPR018101">
    <property type="entry name" value="Transl_elong_Ts_CS"/>
</dbReference>
<dbReference type="InterPro" id="IPR009060">
    <property type="entry name" value="UBA-like_sf"/>
</dbReference>
<dbReference type="NCBIfam" id="TIGR00116">
    <property type="entry name" value="tsf"/>
    <property type="match status" value="2"/>
</dbReference>
<dbReference type="PANTHER" id="PTHR11741">
    <property type="entry name" value="ELONGATION FACTOR TS"/>
    <property type="match status" value="1"/>
</dbReference>
<dbReference type="PANTHER" id="PTHR11741:SF0">
    <property type="entry name" value="ELONGATION FACTOR TS, MITOCHONDRIAL"/>
    <property type="match status" value="1"/>
</dbReference>
<dbReference type="Pfam" id="PF00889">
    <property type="entry name" value="EF_TS"/>
    <property type="match status" value="2"/>
</dbReference>
<dbReference type="SUPFAM" id="SSF54713">
    <property type="entry name" value="Elongation factor Ts (EF-Ts), dimerisation domain"/>
    <property type="match status" value="1"/>
</dbReference>
<dbReference type="SUPFAM" id="SSF46934">
    <property type="entry name" value="UBA-like"/>
    <property type="match status" value="1"/>
</dbReference>
<dbReference type="PROSITE" id="PS01126">
    <property type="entry name" value="EF_TS_1"/>
    <property type="match status" value="1"/>
</dbReference>
<dbReference type="PROSITE" id="PS01127">
    <property type="entry name" value="EF_TS_2"/>
    <property type="match status" value="1"/>
</dbReference>
<reference key="1">
    <citation type="journal article" date="2008" name="DNA Res.">
        <title>Complete genome sequence of Finegoldia magna, an anaerobic opportunistic pathogen.</title>
        <authorList>
            <person name="Goto T."/>
            <person name="Yamashita A."/>
            <person name="Hirakawa H."/>
            <person name="Matsutani M."/>
            <person name="Todo K."/>
            <person name="Ohshima K."/>
            <person name="Toh H."/>
            <person name="Miyamoto K."/>
            <person name="Kuhara S."/>
            <person name="Hattori M."/>
            <person name="Shimizu T."/>
            <person name="Akimoto S."/>
        </authorList>
    </citation>
    <scope>NUCLEOTIDE SEQUENCE [LARGE SCALE GENOMIC DNA]</scope>
    <source>
        <strain>ATCC 29328 / DSM 20472 / WAL 2508</strain>
    </source>
</reference>
<evidence type="ECO:0000255" key="1">
    <source>
        <dbReference type="HAMAP-Rule" id="MF_00050"/>
    </source>
</evidence>
<name>EFTS_FINM2</name>
<protein>
    <recommendedName>
        <fullName evidence="1">Elongation factor Ts</fullName>
        <shortName evidence="1">EF-Ts</shortName>
    </recommendedName>
</protein>
<keyword id="KW-0963">Cytoplasm</keyword>
<keyword id="KW-0251">Elongation factor</keyword>
<keyword id="KW-0648">Protein biosynthesis</keyword>
<keyword id="KW-1185">Reference proteome</keyword>
<gene>
    <name evidence="1" type="primary">tsf</name>
    <name type="ordered locus">FMG_0707</name>
</gene>
<accession>B0S185</accession>
<organism>
    <name type="scientific">Finegoldia magna (strain ATCC 29328 / DSM 20472 / WAL 2508)</name>
    <name type="common">Peptostreptococcus magnus</name>
    <dbReference type="NCBI Taxonomy" id="334413"/>
    <lineage>
        <taxon>Bacteria</taxon>
        <taxon>Bacillati</taxon>
        <taxon>Bacillota</taxon>
        <taxon>Tissierellia</taxon>
        <taxon>Tissierellales</taxon>
        <taxon>Peptoniphilaceae</taxon>
        <taxon>Finegoldia</taxon>
    </lineage>
</organism>
<proteinExistence type="inferred from homology"/>